<sequence>MGRSKCFMDISIGGELEGRIVIELYDDVVPKTAENFRLLCTGEKGLGPNTGVPLHYKGNRFHRVIKGFMIQGGDISANDGTGGESIYGLKFDDENFELKHERKGMLSMANSGPNTNGSQFFITTTRTSHLDGKHVVFGRVTKGMGVVRSIEHVSIEEQSCPSQDVVIHDCGEIPEGADDGICDFFKDGDVYPDWPIDLNESPAELSWWMETVDFVKAHGNEHFKKQDYKMALRKYRKALRYLDICWEKEGIDEETSTALRKTKSQIFTNSAACKLKFGDAKGALLDTEFAMRDEDNNVKALFRQGQAYMALNNVDAAAESLEKALQFEPNDAGIKKEYAAVMKKIAFRDNEEKKQYRKMFV</sequence>
<reference key="1">
    <citation type="journal article" date="2001" name="Science">
        <title>Regulation of vegetative phase change in Arabidopsis thaliana by cyclophilin 40.</title>
        <authorList>
            <person name="Berardini T.Z."/>
            <person name="Bollman K."/>
            <person name="Sun H."/>
            <person name="Poethig R.S."/>
        </authorList>
    </citation>
    <scope>NUCLEOTIDE SEQUENCE [MRNA]</scope>
    <scope>FUNCTION</scope>
    <scope>TISSUE SPECIFICITY</scope>
    <source>
        <strain>cv. Columbia</strain>
    </source>
</reference>
<reference key="2">
    <citation type="journal article" date="1999" name="Nature">
        <title>Sequence and analysis of chromosome 2 of the plant Arabidopsis thaliana.</title>
        <authorList>
            <person name="Lin X."/>
            <person name="Kaul S."/>
            <person name="Rounsley S.D."/>
            <person name="Shea T.P."/>
            <person name="Benito M.-I."/>
            <person name="Town C.D."/>
            <person name="Fujii C.Y."/>
            <person name="Mason T.M."/>
            <person name="Bowman C.L."/>
            <person name="Barnstead M.E."/>
            <person name="Feldblyum T.V."/>
            <person name="Buell C.R."/>
            <person name="Ketchum K.A."/>
            <person name="Lee J.J."/>
            <person name="Ronning C.M."/>
            <person name="Koo H.L."/>
            <person name="Moffat K.S."/>
            <person name="Cronin L.A."/>
            <person name="Shen M."/>
            <person name="Pai G."/>
            <person name="Van Aken S."/>
            <person name="Umayam L."/>
            <person name="Tallon L.J."/>
            <person name="Gill J.E."/>
            <person name="Adams M.D."/>
            <person name="Carrera A.J."/>
            <person name="Creasy T.H."/>
            <person name="Goodman H.M."/>
            <person name="Somerville C.R."/>
            <person name="Copenhaver G.P."/>
            <person name="Preuss D."/>
            <person name="Nierman W.C."/>
            <person name="White O."/>
            <person name="Eisen J.A."/>
            <person name="Salzberg S.L."/>
            <person name="Fraser C.M."/>
            <person name="Venter J.C."/>
        </authorList>
    </citation>
    <scope>NUCLEOTIDE SEQUENCE [LARGE SCALE GENOMIC DNA]</scope>
    <source>
        <strain>cv. Columbia</strain>
    </source>
</reference>
<reference key="3">
    <citation type="journal article" date="2017" name="Plant J.">
        <title>Araport11: a complete reannotation of the Arabidopsis thaliana reference genome.</title>
        <authorList>
            <person name="Cheng C.Y."/>
            <person name="Krishnakumar V."/>
            <person name="Chan A.P."/>
            <person name="Thibaud-Nissen F."/>
            <person name="Schobel S."/>
            <person name="Town C.D."/>
        </authorList>
    </citation>
    <scope>GENOME REANNOTATION</scope>
    <source>
        <strain>cv. Columbia</strain>
    </source>
</reference>
<reference key="4">
    <citation type="submission" date="2006-09" db="EMBL/GenBank/DDBJ databases">
        <title>Arabidopsis ORF clones.</title>
        <authorList>
            <person name="Bautista V.R."/>
            <person name="Kim C.J."/>
            <person name="Chen H."/>
            <person name="Quinitio C."/>
            <person name="Ecker J.R."/>
        </authorList>
    </citation>
    <scope>NUCLEOTIDE SEQUENCE [LARGE SCALE MRNA]</scope>
</reference>
<reference key="5">
    <citation type="journal article" date="2004" name="Plant Physiol.">
        <title>Immunophilins and parvulins. Superfamily of peptidyl prolyl isomerases in Arabidopsis.</title>
        <authorList>
            <person name="He Z."/>
            <person name="Li L."/>
            <person name="Luan S."/>
        </authorList>
    </citation>
    <scope>GENE FAMILY</scope>
    <scope>NOMENCLATURE</scope>
</reference>
<reference key="6">
    <citation type="journal article" date="2004" name="Plant Physiol.">
        <title>The Arabidopsis cyclophilin gene family.</title>
        <authorList>
            <person name="Romano P.G.N."/>
            <person name="Horton P."/>
            <person name="Gray J.E."/>
        </authorList>
    </citation>
    <scope>GENE FAMILY</scope>
    <scope>NOMENCLATURE</scope>
</reference>
<reference key="7">
    <citation type="journal article" date="2008" name="Plant Cell">
        <title>REBELOTE, SQUINT, and ULTRAPETALA1 function redundantly in the temporal regulation of floral meristem termination in Arabidopsis thaliana.</title>
        <authorList>
            <person name="Prunet N."/>
            <person name="Morel P."/>
            <person name="Thierry A.-M."/>
            <person name="Eshed Y."/>
            <person name="Bowman J.L."/>
            <person name="Negrutiu I."/>
            <person name="Trehin C."/>
        </authorList>
    </citation>
    <scope>FUNCTION</scope>
    <scope>DISRUPTION PHENOTYPE</scope>
    <scope>TISSUE SPECIFICITY</scope>
    <scope>SUBCELLULAR LOCATION</scope>
</reference>
<dbReference type="EC" id="5.2.1.8"/>
<dbReference type="EMBL" id="AY026065">
    <property type="protein sequence ID" value="AAK02067.1"/>
    <property type="molecule type" value="mRNA"/>
</dbReference>
<dbReference type="EMBL" id="AC006438">
    <property type="protein sequence ID" value="AAD41985.2"/>
    <property type="molecule type" value="Genomic_DNA"/>
</dbReference>
<dbReference type="EMBL" id="CP002685">
    <property type="protein sequence ID" value="AEC06438.1"/>
    <property type="molecule type" value="Genomic_DNA"/>
</dbReference>
<dbReference type="EMBL" id="BT028999">
    <property type="protein sequence ID" value="ABI93908.1"/>
    <property type="molecule type" value="mRNA"/>
</dbReference>
<dbReference type="PIR" id="D84533">
    <property type="entry name" value="D84533"/>
</dbReference>
<dbReference type="RefSeq" id="NP_565381.1">
    <property type="nucleotide sequence ID" value="NM_127141.3"/>
</dbReference>
<dbReference type="SMR" id="Q9C566"/>
<dbReference type="BioGRID" id="1433">
    <property type="interactions" value="3"/>
</dbReference>
<dbReference type="FunCoup" id="Q9C566">
    <property type="interactions" value="3548"/>
</dbReference>
<dbReference type="IntAct" id="Q9C566">
    <property type="interactions" value="2"/>
</dbReference>
<dbReference type="MINT" id="Q9C566"/>
<dbReference type="STRING" id="3702.Q9C566"/>
<dbReference type="iPTMnet" id="Q9C566"/>
<dbReference type="PaxDb" id="3702-AT2G15790.1"/>
<dbReference type="ProteomicsDB" id="222668"/>
<dbReference type="EnsemblPlants" id="AT2G15790.1">
    <property type="protein sequence ID" value="AT2G15790.1"/>
    <property type="gene ID" value="AT2G15790"/>
</dbReference>
<dbReference type="GeneID" id="816074"/>
<dbReference type="Gramene" id="AT2G15790.1">
    <property type="protein sequence ID" value="AT2G15790.1"/>
    <property type="gene ID" value="AT2G15790"/>
</dbReference>
<dbReference type="KEGG" id="ath:AT2G15790"/>
<dbReference type="Araport" id="AT2G15790"/>
<dbReference type="TAIR" id="AT2G15790">
    <property type="gene designation" value="SQN"/>
</dbReference>
<dbReference type="eggNOG" id="KOG0546">
    <property type="taxonomic scope" value="Eukaryota"/>
</dbReference>
<dbReference type="HOGENOM" id="CLU_012062_37_3_1"/>
<dbReference type="InParanoid" id="Q9C566"/>
<dbReference type="OMA" id="EMEQNCN"/>
<dbReference type="PhylomeDB" id="Q9C566"/>
<dbReference type="PRO" id="PR:Q9C566"/>
<dbReference type="Proteomes" id="UP000006548">
    <property type="component" value="Chromosome 2"/>
</dbReference>
<dbReference type="ExpressionAtlas" id="Q9C566">
    <property type="expression patterns" value="baseline and differential"/>
</dbReference>
<dbReference type="GO" id="GO:0005737">
    <property type="term" value="C:cytoplasm"/>
    <property type="evidence" value="ECO:0000314"/>
    <property type="project" value="TAIR"/>
</dbReference>
<dbReference type="GO" id="GO:0003755">
    <property type="term" value="F:peptidyl-prolyl cis-trans isomerase activity"/>
    <property type="evidence" value="ECO:0000250"/>
    <property type="project" value="TAIR"/>
</dbReference>
<dbReference type="GO" id="GO:0010582">
    <property type="term" value="P:floral meristem determinacy"/>
    <property type="evidence" value="ECO:0000316"/>
    <property type="project" value="TAIR"/>
</dbReference>
<dbReference type="GO" id="GO:0006457">
    <property type="term" value="P:protein folding"/>
    <property type="evidence" value="ECO:0007669"/>
    <property type="project" value="InterPro"/>
</dbReference>
<dbReference type="GO" id="GO:0010050">
    <property type="term" value="P:vegetative phase change"/>
    <property type="evidence" value="ECO:0000315"/>
    <property type="project" value="TAIR"/>
</dbReference>
<dbReference type="CDD" id="cd01926">
    <property type="entry name" value="cyclophilin_ABH_like"/>
    <property type="match status" value="1"/>
</dbReference>
<dbReference type="FunFam" id="2.40.100.10:FF:000009">
    <property type="entry name" value="Peptidyl-prolyl cis-trans isomerase D"/>
    <property type="match status" value="1"/>
</dbReference>
<dbReference type="FunFam" id="1.25.40.10:FF:000029">
    <property type="entry name" value="peptidyl-prolyl cis-trans isomerase D"/>
    <property type="match status" value="1"/>
</dbReference>
<dbReference type="Gene3D" id="2.40.100.10">
    <property type="entry name" value="Cyclophilin-like"/>
    <property type="match status" value="1"/>
</dbReference>
<dbReference type="Gene3D" id="1.25.40.10">
    <property type="entry name" value="Tetratricopeptide repeat domain"/>
    <property type="match status" value="1"/>
</dbReference>
<dbReference type="InterPro" id="IPR029000">
    <property type="entry name" value="Cyclophilin-like_dom_sf"/>
</dbReference>
<dbReference type="InterPro" id="IPR020892">
    <property type="entry name" value="Cyclophilin-type_PPIase_CS"/>
</dbReference>
<dbReference type="InterPro" id="IPR002130">
    <property type="entry name" value="Cyclophilin-type_PPIase_dom"/>
</dbReference>
<dbReference type="InterPro" id="IPR011990">
    <property type="entry name" value="TPR-like_helical_dom_sf"/>
</dbReference>
<dbReference type="InterPro" id="IPR013105">
    <property type="entry name" value="TPR_2"/>
</dbReference>
<dbReference type="InterPro" id="IPR019734">
    <property type="entry name" value="TPR_rpt"/>
</dbReference>
<dbReference type="PANTHER" id="PTHR11071">
    <property type="entry name" value="PEPTIDYL-PROLYL CIS-TRANS ISOMERASE"/>
    <property type="match status" value="1"/>
</dbReference>
<dbReference type="PANTHER" id="PTHR11071:SF561">
    <property type="entry name" value="PEPTIDYL-PROLYL CIS-TRANS ISOMERASE D-RELATED"/>
    <property type="match status" value="1"/>
</dbReference>
<dbReference type="Pfam" id="PF00160">
    <property type="entry name" value="Pro_isomerase"/>
    <property type="match status" value="1"/>
</dbReference>
<dbReference type="Pfam" id="PF07719">
    <property type="entry name" value="TPR_2"/>
    <property type="match status" value="1"/>
</dbReference>
<dbReference type="PRINTS" id="PR00153">
    <property type="entry name" value="CSAPPISMRASE"/>
</dbReference>
<dbReference type="SMART" id="SM00028">
    <property type="entry name" value="TPR"/>
    <property type="match status" value="2"/>
</dbReference>
<dbReference type="SUPFAM" id="SSF50891">
    <property type="entry name" value="Cyclophilin-like"/>
    <property type="match status" value="1"/>
</dbReference>
<dbReference type="SUPFAM" id="SSF48452">
    <property type="entry name" value="TPR-like"/>
    <property type="match status" value="1"/>
</dbReference>
<dbReference type="PROSITE" id="PS00170">
    <property type="entry name" value="CSA_PPIASE_1"/>
    <property type="match status" value="1"/>
</dbReference>
<dbReference type="PROSITE" id="PS50072">
    <property type="entry name" value="CSA_PPIASE_2"/>
    <property type="match status" value="1"/>
</dbReference>
<dbReference type="PROSITE" id="PS50005">
    <property type="entry name" value="TPR"/>
    <property type="match status" value="2"/>
</dbReference>
<dbReference type="PROSITE" id="PS50293">
    <property type="entry name" value="TPR_REGION"/>
    <property type="match status" value="1"/>
</dbReference>
<gene>
    <name evidence="5 6 7" type="primary">CYP40</name>
    <name evidence="5" type="synonym">SQN</name>
    <name evidence="9" type="ordered locus">At2g15790</name>
    <name evidence="10" type="ORF">F19G14.21</name>
</gene>
<protein>
    <recommendedName>
        <fullName evidence="6">Peptidyl-prolyl cis-trans isomerase CYP40</fullName>
        <shortName evidence="6">PPIase CYP40</shortName>
        <ecNumber>5.2.1.8</ecNumber>
    </recommendedName>
    <alternativeName>
        <fullName evidence="5 6 7">Cyclophilin of 40 kDa</fullName>
        <shortName evidence="6 7">AtCYP40</shortName>
        <shortName evidence="5 6 7">Cyclophilin-40</shortName>
    </alternativeName>
    <alternativeName>
        <fullName evidence="5">Protein SQUINT</fullName>
    </alternativeName>
    <alternativeName>
        <fullName evidence="5">Rotamase CYP40</fullName>
    </alternativeName>
</protein>
<organism>
    <name type="scientific">Arabidopsis thaliana</name>
    <name type="common">Mouse-ear cress</name>
    <dbReference type="NCBI Taxonomy" id="3702"/>
    <lineage>
        <taxon>Eukaryota</taxon>
        <taxon>Viridiplantae</taxon>
        <taxon>Streptophyta</taxon>
        <taxon>Embryophyta</taxon>
        <taxon>Tracheophyta</taxon>
        <taxon>Spermatophyta</taxon>
        <taxon>Magnoliopsida</taxon>
        <taxon>eudicotyledons</taxon>
        <taxon>Gunneridae</taxon>
        <taxon>Pentapetalae</taxon>
        <taxon>rosids</taxon>
        <taxon>malvids</taxon>
        <taxon>Brassicales</taxon>
        <taxon>Brassicaceae</taxon>
        <taxon>Camelineae</taxon>
        <taxon>Arabidopsis</taxon>
    </lineage>
</organism>
<proteinExistence type="evidence at transcript level"/>
<comment type="function">
    <text evidence="3 4">PPIases accelerate the folding of proteins (PubMed:11264535). It catalyzes the cis-trans isomerization of proline imidic peptide bonds in oligopeptides (PubMed:11264535). Involved in promoting the expression of the juvenile phase of vegetative development, and, to a lower extent, in regulating the positioning of floral buds, floral morphogenesis and the expression of HSPs (PubMed:11264535). Collaboratively with RBL and ULT1, influences floral meristem (FM) determinacy in an AGAMOUS and SUPERMAN-dependent manner, thus contributing to the floral developmental homeostasis (PubMed:18441215).</text>
</comment>
<comment type="catalytic activity">
    <reaction>
        <text>[protein]-peptidylproline (omega=180) = [protein]-peptidylproline (omega=0)</text>
        <dbReference type="Rhea" id="RHEA:16237"/>
        <dbReference type="Rhea" id="RHEA-COMP:10747"/>
        <dbReference type="Rhea" id="RHEA-COMP:10748"/>
        <dbReference type="ChEBI" id="CHEBI:83833"/>
        <dbReference type="ChEBI" id="CHEBI:83834"/>
        <dbReference type="EC" id="5.2.1.8"/>
    </reaction>
</comment>
<comment type="activity regulation">
    <text evidence="1">Binds cyclosporin A (CsA). CsA mediates some of its effects via an inhibitory action on PPIase (By similarity).</text>
</comment>
<comment type="subcellular location">
    <subcellularLocation>
        <location evidence="4">Cytoplasm</location>
    </subcellularLocation>
</comment>
<comment type="tissue specificity">
    <text evidence="3 4">Expressed at low levels in seedlings, roots, shoots, leaves, stems, inflorescences, flowers and siliques, with highest levels dividing tissues.</text>
</comment>
<comment type="disruption phenotype">
    <text evidence="4">Plants lacking both CRC and CYP40/SQN exhibit strong floral meristem (FM) indeterminacy with reiterations of extra floral whorls in the center of the flower associated with reduced AGAMOUS and SUPERMAN levels.</text>
</comment>
<comment type="similarity">
    <text evidence="8">Belongs to the cyclophilin-type PPIase family.</text>
</comment>
<keyword id="KW-0143">Chaperone</keyword>
<keyword id="KW-0963">Cytoplasm</keyword>
<keyword id="KW-0413">Isomerase</keyword>
<keyword id="KW-1185">Reference proteome</keyword>
<keyword id="KW-0677">Repeat</keyword>
<keyword id="KW-0697">Rotamase</keyword>
<keyword id="KW-0802">TPR repeat</keyword>
<evidence type="ECO:0000250" key="1"/>
<evidence type="ECO:0000255" key="2">
    <source>
        <dbReference type="PROSITE-ProRule" id="PRU00156"/>
    </source>
</evidence>
<evidence type="ECO:0000269" key="3">
    <source>
    </source>
</evidence>
<evidence type="ECO:0000269" key="4">
    <source>
    </source>
</evidence>
<evidence type="ECO:0000303" key="5">
    <source>
    </source>
</evidence>
<evidence type="ECO:0000303" key="6">
    <source>
    </source>
</evidence>
<evidence type="ECO:0000303" key="7">
    <source>
    </source>
</evidence>
<evidence type="ECO:0000305" key="8"/>
<evidence type="ECO:0000312" key="9">
    <source>
        <dbReference type="Araport" id="AT2G15790"/>
    </source>
</evidence>
<evidence type="ECO:0000312" key="10">
    <source>
        <dbReference type="EMBL" id="AAD41985.2"/>
    </source>
</evidence>
<accession>Q9C566</accession>
<accession>Q08A80</accession>
<accession>Q9XIL2</accession>
<name>CYP40_ARATH</name>
<feature type="chain" id="PRO_0000064138" description="Peptidyl-prolyl cis-trans isomerase CYP40">
    <location>
        <begin position="1"/>
        <end position="361"/>
    </location>
</feature>
<feature type="domain" description="PPIase cyclophilin-type" evidence="2">
    <location>
        <begin position="7"/>
        <end position="172"/>
    </location>
</feature>
<feature type="repeat" description="TPR 1">
    <location>
        <begin position="212"/>
        <end position="245"/>
    </location>
</feature>
<feature type="repeat" description="TPR 2">
    <location>
        <begin position="298"/>
        <end position="331"/>
    </location>
</feature>